<comment type="function">
    <text evidence="1">Part of a membrane-bound complex that couples electron transfer with translocation of ions across the membrane.</text>
</comment>
<comment type="subunit">
    <text evidence="1">The complex is composed of six subunits: RnfA, RnfB, RnfC, RnfD, RnfE and RnfG.</text>
</comment>
<comment type="subcellular location">
    <subcellularLocation>
        <location evidence="1">Cell inner membrane</location>
        <topology evidence="1">Multi-pass membrane protein</topology>
    </subcellularLocation>
</comment>
<comment type="similarity">
    <text evidence="1">Belongs to the NqrDE/RnfAE family.</text>
</comment>
<feature type="chain" id="PRO_1000191708" description="Ion-translocating oxidoreductase complex subunit A">
    <location>
        <begin position="1"/>
        <end position="193"/>
    </location>
</feature>
<feature type="transmembrane region" description="Helical" evidence="1">
    <location>
        <begin position="5"/>
        <end position="25"/>
    </location>
</feature>
<feature type="transmembrane region" description="Helical" evidence="1">
    <location>
        <begin position="39"/>
        <end position="59"/>
    </location>
</feature>
<feature type="transmembrane region" description="Helical" evidence="1">
    <location>
        <begin position="63"/>
        <end position="83"/>
    </location>
</feature>
<feature type="transmembrane region" description="Helical" evidence="1">
    <location>
        <begin position="102"/>
        <end position="122"/>
    </location>
</feature>
<feature type="transmembrane region" description="Helical" evidence="1">
    <location>
        <begin position="134"/>
        <end position="154"/>
    </location>
</feature>
<feature type="transmembrane region" description="Helical" evidence="1">
    <location>
        <begin position="171"/>
        <end position="191"/>
    </location>
</feature>
<evidence type="ECO:0000255" key="1">
    <source>
        <dbReference type="HAMAP-Rule" id="MF_00459"/>
    </source>
</evidence>
<sequence>MTEYLLLLIGTVLVNNFVLVKFLGLCPFMGVSKKLESAIGMGLATTFVLTLASVCSYLIETYILAPLGIEYLRTMSFILVIAVVVQFTEMVVHKTSPTLYRVLGIFLPLITTNCAVLGVALLNVTENHNFIESIIYGFGAAVGFSLVLILFSAMRERIAAADVPLPFKGASIAMITAGLMSLAFMGFTGLVKL</sequence>
<keyword id="KW-0997">Cell inner membrane</keyword>
<keyword id="KW-1003">Cell membrane</keyword>
<keyword id="KW-0249">Electron transport</keyword>
<keyword id="KW-0472">Membrane</keyword>
<keyword id="KW-1278">Translocase</keyword>
<keyword id="KW-0812">Transmembrane</keyword>
<keyword id="KW-1133">Transmembrane helix</keyword>
<keyword id="KW-0813">Transport</keyword>
<name>RNFA_ALISL</name>
<protein>
    <recommendedName>
        <fullName evidence="1">Ion-translocating oxidoreductase complex subunit A</fullName>
        <ecNumber evidence="1">7.-.-.-</ecNumber>
    </recommendedName>
    <alternativeName>
        <fullName evidence="1">Rnf electron transport complex subunit A</fullName>
    </alternativeName>
</protein>
<reference key="1">
    <citation type="journal article" date="2008" name="BMC Genomics">
        <title>The genome sequence of the fish pathogen Aliivibrio salmonicida strain LFI1238 shows extensive evidence of gene decay.</title>
        <authorList>
            <person name="Hjerde E."/>
            <person name="Lorentzen M.S."/>
            <person name="Holden M.T."/>
            <person name="Seeger K."/>
            <person name="Paulsen S."/>
            <person name="Bason N."/>
            <person name="Churcher C."/>
            <person name="Harris D."/>
            <person name="Norbertczak H."/>
            <person name="Quail M.A."/>
            <person name="Sanders S."/>
            <person name="Thurston S."/>
            <person name="Parkhill J."/>
            <person name="Willassen N.P."/>
            <person name="Thomson N.R."/>
        </authorList>
    </citation>
    <scope>NUCLEOTIDE SEQUENCE [LARGE SCALE GENOMIC DNA]</scope>
    <source>
        <strain>LFI1238</strain>
    </source>
</reference>
<proteinExistence type="inferred from homology"/>
<organism>
    <name type="scientific">Aliivibrio salmonicida (strain LFI1238)</name>
    <name type="common">Vibrio salmonicida (strain LFI1238)</name>
    <dbReference type="NCBI Taxonomy" id="316275"/>
    <lineage>
        <taxon>Bacteria</taxon>
        <taxon>Pseudomonadati</taxon>
        <taxon>Pseudomonadota</taxon>
        <taxon>Gammaproteobacteria</taxon>
        <taxon>Vibrionales</taxon>
        <taxon>Vibrionaceae</taxon>
        <taxon>Aliivibrio</taxon>
    </lineage>
</organism>
<accession>B6EGH7</accession>
<dbReference type="EC" id="7.-.-.-" evidence="1"/>
<dbReference type="EMBL" id="FM178379">
    <property type="protein sequence ID" value="CAQ79557.1"/>
    <property type="molecule type" value="Genomic_DNA"/>
</dbReference>
<dbReference type="SMR" id="B6EGH7"/>
<dbReference type="KEGG" id="vsa:VSAL_I1872"/>
<dbReference type="eggNOG" id="COG4657">
    <property type="taxonomic scope" value="Bacteria"/>
</dbReference>
<dbReference type="HOGENOM" id="CLU_095255_1_0_6"/>
<dbReference type="Proteomes" id="UP000001730">
    <property type="component" value="Chromosome 1"/>
</dbReference>
<dbReference type="GO" id="GO:0005886">
    <property type="term" value="C:plasma membrane"/>
    <property type="evidence" value="ECO:0007669"/>
    <property type="project" value="UniProtKB-SubCell"/>
</dbReference>
<dbReference type="GO" id="GO:0022900">
    <property type="term" value="P:electron transport chain"/>
    <property type="evidence" value="ECO:0007669"/>
    <property type="project" value="UniProtKB-UniRule"/>
</dbReference>
<dbReference type="HAMAP" id="MF_00459">
    <property type="entry name" value="RsxA_RnfA"/>
    <property type="match status" value="1"/>
</dbReference>
<dbReference type="InterPro" id="IPR011293">
    <property type="entry name" value="Ion_transpt_RnfA/RsxA"/>
</dbReference>
<dbReference type="InterPro" id="IPR003667">
    <property type="entry name" value="NqrDE/RnfAE"/>
</dbReference>
<dbReference type="InterPro" id="IPR050133">
    <property type="entry name" value="NqrDE/RnfAE_oxidrdctase"/>
</dbReference>
<dbReference type="NCBIfam" id="NF003481">
    <property type="entry name" value="PRK05151.1"/>
    <property type="match status" value="1"/>
</dbReference>
<dbReference type="NCBIfam" id="TIGR01943">
    <property type="entry name" value="rnfA"/>
    <property type="match status" value="1"/>
</dbReference>
<dbReference type="PANTHER" id="PTHR30335">
    <property type="entry name" value="INTEGRAL MEMBRANE PROTEIN OF SOXR-REDUCING COMPLEX"/>
    <property type="match status" value="1"/>
</dbReference>
<dbReference type="PANTHER" id="PTHR30335:SF0">
    <property type="entry name" value="ION-TRANSLOCATING OXIDOREDUCTASE COMPLEX SUBUNIT A"/>
    <property type="match status" value="1"/>
</dbReference>
<dbReference type="Pfam" id="PF02508">
    <property type="entry name" value="Rnf-Nqr"/>
    <property type="match status" value="1"/>
</dbReference>
<dbReference type="PIRSF" id="PIRSF006102">
    <property type="entry name" value="NQR_DE"/>
    <property type="match status" value="1"/>
</dbReference>
<gene>
    <name evidence="1" type="primary">rnfA</name>
    <name type="ordered locus">VSAL_I1872</name>
</gene>